<name>CTXA1_CERCA</name>
<organism>
    <name type="scientific">Ceratitis capitata</name>
    <name type="common">Mediterranean fruit fly</name>
    <name type="synonym">Tephritis capitata</name>
    <dbReference type="NCBI Taxonomy" id="7213"/>
    <lineage>
        <taxon>Eukaryota</taxon>
        <taxon>Metazoa</taxon>
        <taxon>Ecdysozoa</taxon>
        <taxon>Arthropoda</taxon>
        <taxon>Hexapoda</taxon>
        <taxon>Insecta</taxon>
        <taxon>Pterygota</taxon>
        <taxon>Neoptera</taxon>
        <taxon>Endopterygota</taxon>
        <taxon>Diptera</taxon>
        <taxon>Brachycera</taxon>
        <taxon>Muscomorpha</taxon>
        <taxon>Tephritoidea</taxon>
        <taxon>Tephritidae</taxon>
        <taxon>Ceratitis</taxon>
        <taxon>Ceratitis</taxon>
    </lineage>
</organism>
<comment type="function">
    <text>Female-specific peptides with potent activity against Gram-positive and Gram-negative bacteria. They have as well hemolytic activity.</text>
</comment>
<comment type="biophysicochemical properties">
    <temperatureDependence>
        <text>Thermostable. Still active at 100 degrees Celsius.</text>
    </temperatureDependence>
</comment>
<comment type="subunit">
    <text>Homomer of four to six subunits.</text>
</comment>
<comment type="subcellular location">
    <subcellularLocation>
        <location>Secreted</location>
    </subcellularLocation>
</comment>
<accession>P36190</accession>
<feature type="signal peptide" evidence="1">
    <location>
        <begin position="1"/>
        <end position="23"/>
    </location>
</feature>
<feature type="propeptide" id="PRO_0000004964" evidence="2">
    <location>
        <begin position="24"/>
        <end position="35"/>
    </location>
</feature>
<feature type="peptide" id="PRO_0000004965" description="Ceratotoxin-A">
    <location>
        <begin position="36"/>
        <end position="64"/>
    </location>
</feature>
<feature type="propeptide" id="PRO_0000004966">
    <location>
        <begin position="65"/>
        <end position="71"/>
    </location>
</feature>
<protein>
    <recommendedName>
        <fullName>Ceratotoxin-A</fullName>
    </recommendedName>
</protein>
<proteinExistence type="evidence at protein level"/>
<sequence>MANLKAVFLICIVAFIALQCVVAEPAAEDSVVVKRSIGSALKKALPVAKKIGKIALPIAKAALPVAAGLVG</sequence>
<keyword id="KW-0044">Antibiotic</keyword>
<keyword id="KW-0929">Antimicrobial</keyword>
<keyword id="KW-0165">Cleavage on pair of basic residues</keyword>
<keyword id="KW-0204">Cytolysis</keyword>
<keyword id="KW-0903">Direct protein sequencing</keyword>
<keyword id="KW-0354">Hemolysis</keyword>
<keyword id="KW-0391">Immunity</keyword>
<keyword id="KW-0399">Innate immunity</keyword>
<keyword id="KW-0964">Secreted</keyword>
<keyword id="KW-0732">Signal</keyword>
<evidence type="ECO:0000255" key="1"/>
<evidence type="ECO:0000269" key="2">
    <source>
    </source>
</evidence>
<gene>
    <name type="primary">CTXA1</name>
</gene>
<dbReference type="EMBL" id="L34403">
    <property type="protein sequence ID" value="AAA87381.1"/>
    <property type="molecule type" value="mRNA"/>
</dbReference>
<dbReference type="SMR" id="P36190"/>
<dbReference type="TCDB" id="1.C.52.2.1">
    <property type="family name" value="the dermaseptin (dermaseptin) family"/>
</dbReference>
<dbReference type="EnsemblMetazoa" id="XM_004523284.2">
    <property type="protein sequence ID" value="XP_004523341.1"/>
    <property type="gene ID" value="LOC101461857"/>
</dbReference>
<dbReference type="GeneID" id="101461857"/>
<dbReference type="KEGG" id="ccat:101461857"/>
<dbReference type="GO" id="GO:0005576">
    <property type="term" value="C:extracellular region"/>
    <property type="evidence" value="ECO:0007669"/>
    <property type="project" value="UniProtKB-SubCell"/>
</dbReference>
<dbReference type="GO" id="GO:0042742">
    <property type="term" value="P:defense response to bacterium"/>
    <property type="evidence" value="ECO:0007669"/>
    <property type="project" value="UniProtKB-KW"/>
</dbReference>
<dbReference type="GO" id="GO:0045087">
    <property type="term" value="P:innate immune response"/>
    <property type="evidence" value="ECO:0007669"/>
    <property type="project" value="UniProtKB-KW"/>
</dbReference>
<dbReference type="GO" id="GO:0031640">
    <property type="term" value="P:killing of cells of another organism"/>
    <property type="evidence" value="ECO:0007669"/>
    <property type="project" value="UniProtKB-KW"/>
</dbReference>
<reference key="1">
    <citation type="journal article" date="1995" name="J. Biol. Chem.">
        <title>cDNA sequence and expression of the ceratotoxin gene encoding an antibacterial sex-specific peptide from the medfly Ceratitis capitata (diptera).</title>
        <authorList>
            <person name="Marchini D."/>
            <person name="Manetti A.G.O."/>
            <person name="Rosetto M."/>
            <person name="Bernini L.F."/>
            <person name="Telford J.L."/>
            <person name="Baldari C.T."/>
            <person name="Dallai R."/>
        </authorList>
    </citation>
    <scope>NUCLEOTIDE SEQUENCE [MRNA]</scope>
</reference>
<reference key="2">
    <citation type="journal article" date="1993" name="Insect Biochem. Mol. Biol.">
        <title>Purification and primary structure of ceratotoxin A and B, two antibacterial peptides from the female reproductive accessory glands of the medfly Ceratitis capitata (Insecta: Diptera).</title>
        <authorList>
            <person name="Marchini D."/>
            <person name="Giordano P.C."/>
            <person name="Amons R."/>
            <person name="Bernini L.F."/>
            <person name="Dallai R."/>
        </authorList>
    </citation>
    <scope>PROTEIN SEQUENCE OF 36-64</scope>
    <source>
        <tissue>Female accessory gland</tissue>
    </source>
</reference>